<comment type="function">
    <text evidence="1">Probably involved in mitochondrion division process. When overexpressed, induces mitochondrial tubule formation. Binds to and hydrolyzes GTP (By similarity).</text>
</comment>
<comment type="subcellular location">
    <subcellularLocation>
        <location evidence="5">Mitochondrion matrix</location>
    </subcellularLocation>
</comment>
<comment type="similarity">
    <text evidence="4">Belongs to the FtsZ family.</text>
</comment>
<name>FTSZA_DICDI</name>
<accession>Q54Z54</accession>
<accession>Q86AW4</accession>
<accession>Q9GPZ8</accession>
<gene>
    <name type="primary">fszA</name>
    <name type="synonym">ftsZA</name>
    <name type="ORF">DDB_G0277721</name>
</gene>
<keyword id="KW-0342">GTP-binding</keyword>
<keyword id="KW-0496">Mitochondrion</keyword>
<keyword id="KW-0547">Nucleotide-binding</keyword>
<keyword id="KW-1185">Reference proteome</keyword>
<organism>
    <name type="scientific">Dictyostelium discoideum</name>
    <name type="common">Social amoeba</name>
    <dbReference type="NCBI Taxonomy" id="44689"/>
    <lineage>
        <taxon>Eukaryota</taxon>
        <taxon>Amoebozoa</taxon>
        <taxon>Evosea</taxon>
        <taxon>Eumycetozoa</taxon>
        <taxon>Dictyostelia</taxon>
        <taxon>Dictyosteliales</taxon>
        <taxon>Dictyosteliaceae</taxon>
        <taxon>Dictyostelium</taxon>
    </lineage>
</organism>
<evidence type="ECO:0000250" key="1"/>
<evidence type="ECO:0000250" key="2">
    <source>
        <dbReference type="UniProtKB" id="P0A029"/>
    </source>
</evidence>
<evidence type="ECO:0000256" key="3">
    <source>
        <dbReference type="SAM" id="MobiDB-lite"/>
    </source>
</evidence>
<evidence type="ECO:0000305" key="4"/>
<evidence type="ECO:0000305" key="5">
    <source>
    </source>
</evidence>
<protein>
    <recommendedName>
        <fullName>Mitochondrial division protein fszA</fullName>
    </recommendedName>
</protein>
<feature type="chain" id="PRO_0000327692" description="Mitochondrial division protein fszA">
    <location>
        <begin position="1"/>
        <end position="517"/>
    </location>
</feature>
<feature type="region of interest" description="Disordered" evidence="3">
    <location>
        <begin position="496"/>
        <end position="517"/>
    </location>
</feature>
<feature type="compositionally biased region" description="Low complexity" evidence="3">
    <location>
        <begin position="497"/>
        <end position="517"/>
    </location>
</feature>
<feature type="binding site" evidence="2">
    <location>
        <begin position="60"/>
        <end position="64"/>
    </location>
    <ligand>
        <name>GTP</name>
        <dbReference type="ChEBI" id="CHEBI:37565"/>
    </ligand>
</feature>
<feature type="binding site" evidence="2">
    <location>
        <begin position="147"/>
        <end position="149"/>
    </location>
    <ligand>
        <name>GTP</name>
        <dbReference type="ChEBI" id="CHEBI:37565"/>
    </ligand>
</feature>
<feature type="binding site" evidence="2">
    <location>
        <position position="178"/>
    </location>
    <ligand>
        <name>GTP</name>
        <dbReference type="ChEBI" id="CHEBI:37565"/>
    </ligand>
</feature>
<feature type="binding site" evidence="2">
    <location>
        <position position="182"/>
    </location>
    <ligand>
        <name>GTP</name>
        <dbReference type="ChEBI" id="CHEBI:37565"/>
    </ligand>
</feature>
<feature type="binding site" evidence="2">
    <location>
        <position position="225"/>
    </location>
    <ligand>
        <name>GTP</name>
        <dbReference type="ChEBI" id="CHEBI:37565"/>
    </ligand>
</feature>
<feature type="sequence conflict" description="In Ref. 1; AAG37880." evidence="4" ref="1">
    <original>T</original>
    <variation>P</variation>
    <location>
        <position position="105"/>
    </location>
</feature>
<dbReference type="EMBL" id="AF304356">
    <property type="protein sequence ID" value="AAG37880.1"/>
    <property type="molecule type" value="Genomic_DNA"/>
</dbReference>
<dbReference type="EMBL" id="AAFI02000022">
    <property type="protein sequence ID" value="EAL68534.1"/>
    <property type="molecule type" value="Genomic_DNA"/>
</dbReference>
<dbReference type="RefSeq" id="XP_642499.1">
    <property type="nucleotide sequence ID" value="XM_637407.1"/>
</dbReference>
<dbReference type="SMR" id="Q54Z54"/>
<dbReference type="FunCoup" id="Q54Z54">
    <property type="interactions" value="34"/>
</dbReference>
<dbReference type="STRING" id="44689.Q54Z54"/>
<dbReference type="PaxDb" id="44689-DDB0219983"/>
<dbReference type="EnsemblProtists" id="EAL68534">
    <property type="protein sequence ID" value="EAL68534"/>
    <property type="gene ID" value="DDB_G0277721"/>
</dbReference>
<dbReference type="GeneID" id="8621210"/>
<dbReference type="KEGG" id="ddi:DDB_G0277721"/>
<dbReference type="dictyBase" id="DDB_G0277721">
    <property type="gene designation" value="fszA"/>
</dbReference>
<dbReference type="VEuPathDB" id="AmoebaDB:DDB_G0277721"/>
<dbReference type="eggNOG" id="ENOG502QRFN">
    <property type="taxonomic scope" value="Eukaryota"/>
</dbReference>
<dbReference type="HOGENOM" id="CLU_024865_5_2_1"/>
<dbReference type="InParanoid" id="Q54Z54"/>
<dbReference type="OMA" id="VDPMANI"/>
<dbReference type="PhylomeDB" id="Q54Z54"/>
<dbReference type="PRO" id="PR:Q54Z54"/>
<dbReference type="Proteomes" id="UP000002195">
    <property type="component" value="Chromosome 2"/>
</dbReference>
<dbReference type="GO" id="GO:0032153">
    <property type="term" value="C:cell division site"/>
    <property type="evidence" value="ECO:0000318"/>
    <property type="project" value="GO_Central"/>
</dbReference>
<dbReference type="GO" id="GO:0005737">
    <property type="term" value="C:cytoplasm"/>
    <property type="evidence" value="ECO:0000318"/>
    <property type="project" value="GO_Central"/>
</dbReference>
<dbReference type="GO" id="GO:0005759">
    <property type="term" value="C:mitochondrial matrix"/>
    <property type="evidence" value="ECO:0000314"/>
    <property type="project" value="dictyBase"/>
</dbReference>
<dbReference type="GO" id="GO:0005525">
    <property type="term" value="F:GTP binding"/>
    <property type="evidence" value="ECO:0000318"/>
    <property type="project" value="GO_Central"/>
</dbReference>
<dbReference type="GO" id="GO:0003924">
    <property type="term" value="F:GTPase activity"/>
    <property type="evidence" value="ECO:0000318"/>
    <property type="project" value="GO_Central"/>
</dbReference>
<dbReference type="GO" id="GO:0051301">
    <property type="term" value="P:cell division"/>
    <property type="evidence" value="ECO:0000318"/>
    <property type="project" value="GO_Central"/>
</dbReference>
<dbReference type="GO" id="GO:0007005">
    <property type="term" value="P:mitochondrion organization"/>
    <property type="evidence" value="ECO:0000315"/>
    <property type="project" value="dictyBase"/>
</dbReference>
<dbReference type="GO" id="GO:0048285">
    <property type="term" value="P:organelle fission"/>
    <property type="evidence" value="ECO:0000318"/>
    <property type="project" value="GO_Central"/>
</dbReference>
<dbReference type="CDD" id="cd02201">
    <property type="entry name" value="FtsZ_type1"/>
    <property type="match status" value="1"/>
</dbReference>
<dbReference type="FunFam" id="3.40.50.1440:FF:000001">
    <property type="entry name" value="Cell division protein FtsZ"/>
    <property type="match status" value="1"/>
</dbReference>
<dbReference type="Gene3D" id="3.30.1330.20">
    <property type="entry name" value="Tubulin/FtsZ, C-terminal domain"/>
    <property type="match status" value="1"/>
</dbReference>
<dbReference type="Gene3D" id="3.40.50.1440">
    <property type="entry name" value="Tubulin/FtsZ, GTPase domain"/>
    <property type="match status" value="1"/>
</dbReference>
<dbReference type="HAMAP" id="MF_00909">
    <property type="entry name" value="FtsZ"/>
    <property type="match status" value="1"/>
</dbReference>
<dbReference type="InterPro" id="IPR000158">
    <property type="entry name" value="Cell_div_FtsZ"/>
</dbReference>
<dbReference type="InterPro" id="IPR020805">
    <property type="entry name" value="Cell_div_FtsZ_CS"/>
</dbReference>
<dbReference type="InterPro" id="IPR045061">
    <property type="entry name" value="FtsZ/CetZ"/>
</dbReference>
<dbReference type="InterPro" id="IPR024757">
    <property type="entry name" value="FtsZ_C"/>
</dbReference>
<dbReference type="InterPro" id="IPR008280">
    <property type="entry name" value="Tub_FtsZ_C"/>
</dbReference>
<dbReference type="InterPro" id="IPR037103">
    <property type="entry name" value="Tubulin/FtsZ-like_C"/>
</dbReference>
<dbReference type="InterPro" id="IPR018316">
    <property type="entry name" value="Tubulin/FtsZ_2-layer-sand-dom"/>
</dbReference>
<dbReference type="InterPro" id="IPR036525">
    <property type="entry name" value="Tubulin/FtsZ_GTPase_sf"/>
</dbReference>
<dbReference type="InterPro" id="IPR003008">
    <property type="entry name" value="Tubulin_FtsZ_GTPase"/>
</dbReference>
<dbReference type="NCBIfam" id="TIGR00065">
    <property type="entry name" value="ftsZ"/>
    <property type="match status" value="1"/>
</dbReference>
<dbReference type="PANTHER" id="PTHR30314">
    <property type="entry name" value="CELL DIVISION PROTEIN FTSZ-RELATED"/>
    <property type="match status" value="1"/>
</dbReference>
<dbReference type="PANTHER" id="PTHR30314:SF3">
    <property type="entry name" value="MITOCHONDRIAL DIVISION PROTEIN FSZA"/>
    <property type="match status" value="1"/>
</dbReference>
<dbReference type="Pfam" id="PF12327">
    <property type="entry name" value="FtsZ_C"/>
    <property type="match status" value="1"/>
</dbReference>
<dbReference type="Pfam" id="PF00091">
    <property type="entry name" value="Tubulin"/>
    <property type="match status" value="1"/>
</dbReference>
<dbReference type="PRINTS" id="PR00423">
    <property type="entry name" value="CELLDVISFTSZ"/>
</dbReference>
<dbReference type="SMART" id="SM00864">
    <property type="entry name" value="Tubulin"/>
    <property type="match status" value="1"/>
</dbReference>
<dbReference type="SMART" id="SM00865">
    <property type="entry name" value="Tubulin_C"/>
    <property type="match status" value="1"/>
</dbReference>
<dbReference type="SUPFAM" id="SSF55307">
    <property type="entry name" value="Tubulin C-terminal domain-like"/>
    <property type="match status" value="1"/>
</dbReference>
<dbReference type="SUPFAM" id="SSF52490">
    <property type="entry name" value="Tubulin nucleotide-binding domain-like"/>
    <property type="match status" value="1"/>
</dbReference>
<dbReference type="PROSITE" id="PS01134">
    <property type="entry name" value="FTSZ_1"/>
    <property type="match status" value="1"/>
</dbReference>
<sequence>MSQFMIRYQIINLSKVFNSPKSLNFIKRYTTSTASTTTTTTNDDSNWISTPNITVCGIGGGGCNSVNNMINKELYGIDFVVANTDAQALAISCSRKMVQLGKTLTRGLGAGAVPEVGKKATEESIEELMNQIGDTQMLFVTAGMGGGTGTGGAAVIASAAKAKGILTVGIVTKPFHFEGKHRMKLAEQGLIELEKSVDSLIVIPNEKLMEQSQELYIGNAFQMVDDVLYNSIRGISDILVKPGLINLDFADVRSIMCNSGKALMGVGEGEGKGRDAIAANIALNNPLLENINISGAKGVLLNIAGSDLKLQEVDHIVSLVSSKVDPSANIIFGSTFDQQLEGKIRVTLIVTGMDQLIQQQQQQQKQTKIESQVEQKLHSTTIVDQELKPIEPQKSIIIEEEQEEQQQPKPIIPGIFVEQELLTTTTTANITPSQQKQESLTQNNIFSPPQQQQQQPSINLQPNYQQLYQQLYQQQQQQLQQQQPISFLKRLSNLFFTNGNNNKPYNNNKNTPGSNYE</sequence>
<reference key="1">
    <citation type="journal article" date="2003" name="Eukaryot. Cell">
        <title>Two Dictyostelium orthologs of the prokaryotic cell division protein FtsZ localize to mitochondria and are required for the maintenance of normal mitochondrial morphology.</title>
        <authorList>
            <person name="Gilson P.R."/>
            <person name="Yu X.-C."/>
            <person name="Hereld D."/>
            <person name="Barth C."/>
            <person name="Savage A."/>
            <person name="Kiefel B.R."/>
            <person name="Lay S."/>
            <person name="Fisher P.R."/>
            <person name="Margolin W."/>
            <person name="Beech P.L."/>
        </authorList>
    </citation>
    <scope>NUCLEOTIDE SEQUENCE [GENOMIC DNA]</scope>
    <scope>SUBCELLULAR LOCATION</scope>
</reference>
<reference key="2">
    <citation type="journal article" date="2002" name="Nature">
        <title>Sequence and analysis of chromosome 2 of Dictyostelium discoideum.</title>
        <authorList>
            <person name="Gloeckner G."/>
            <person name="Eichinger L."/>
            <person name="Szafranski K."/>
            <person name="Pachebat J.A."/>
            <person name="Bankier A.T."/>
            <person name="Dear P.H."/>
            <person name="Lehmann R."/>
            <person name="Baumgart C."/>
            <person name="Parra G."/>
            <person name="Abril J.F."/>
            <person name="Guigo R."/>
            <person name="Kumpf K."/>
            <person name="Tunggal B."/>
            <person name="Cox E.C."/>
            <person name="Quail M.A."/>
            <person name="Platzer M."/>
            <person name="Rosenthal A."/>
            <person name="Noegel A.A."/>
        </authorList>
    </citation>
    <scope>NUCLEOTIDE SEQUENCE [LARGE SCALE GENOMIC DNA]</scope>
    <source>
        <strain>AX4</strain>
    </source>
</reference>
<reference key="3">
    <citation type="journal article" date="2005" name="Nature">
        <title>The genome of the social amoeba Dictyostelium discoideum.</title>
        <authorList>
            <person name="Eichinger L."/>
            <person name="Pachebat J.A."/>
            <person name="Gloeckner G."/>
            <person name="Rajandream M.A."/>
            <person name="Sucgang R."/>
            <person name="Berriman M."/>
            <person name="Song J."/>
            <person name="Olsen R."/>
            <person name="Szafranski K."/>
            <person name="Xu Q."/>
            <person name="Tunggal B."/>
            <person name="Kummerfeld S."/>
            <person name="Madera M."/>
            <person name="Konfortov B.A."/>
            <person name="Rivero F."/>
            <person name="Bankier A.T."/>
            <person name="Lehmann R."/>
            <person name="Hamlin N."/>
            <person name="Davies R."/>
            <person name="Gaudet P."/>
            <person name="Fey P."/>
            <person name="Pilcher K."/>
            <person name="Chen G."/>
            <person name="Saunders D."/>
            <person name="Sodergren E.J."/>
            <person name="Davis P."/>
            <person name="Kerhornou A."/>
            <person name="Nie X."/>
            <person name="Hall N."/>
            <person name="Anjard C."/>
            <person name="Hemphill L."/>
            <person name="Bason N."/>
            <person name="Farbrother P."/>
            <person name="Desany B."/>
            <person name="Just E."/>
            <person name="Morio T."/>
            <person name="Rost R."/>
            <person name="Churcher C.M."/>
            <person name="Cooper J."/>
            <person name="Haydock S."/>
            <person name="van Driessche N."/>
            <person name="Cronin A."/>
            <person name="Goodhead I."/>
            <person name="Muzny D.M."/>
            <person name="Mourier T."/>
            <person name="Pain A."/>
            <person name="Lu M."/>
            <person name="Harper D."/>
            <person name="Lindsay R."/>
            <person name="Hauser H."/>
            <person name="James K.D."/>
            <person name="Quiles M."/>
            <person name="Madan Babu M."/>
            <person name="Saito T."/>
            <person name="Buchrieser C."/>
            <person name="Wardroper A."/>
            <person name="Felder M."/>
            <person name="Thangavelu M."/>
            <person name="Johnson D."/>
            <person name="Knights A."/>
            <person name="Loulseged H."/>
            <person name="Mungall K.L."/>
            <person name="Oliver K."/>
            <person name="Price C."/>
            <person name="Quail M.A."/>
            <person name="Urushihara H."/>
            <person name="Hernandez J."/>
            <person name="Rabbinowitsch E."/>
            <person name="Steffen D."/>
            <person name="Sanders M."/>
            <person name="Ma J."/>
            <person name="Kohara Y."/>
            <person name="Sharp S."/>
            <person name="Simmonds M.N."/>
            <person name="Spiegler S."/>
            <person name="Tivey A."/>
            <person name="Sugano S."/>
            <person name="White B."/>
            <person name="Walker D."/>
            <person name="Woodward J.R."/>
            <person name="Winckler T."/>
            <person name="Tanaka Y."/>
            <person name="Shaulsky G."/>
            <person name="Schleicher M."/>
            <person name="Weinstock G.M."/>
            <person name="Rosenthal A."/>
            <person name="Cox E.C."/>
            <person name="Chisholm R.L."/>
            <person name="Gibbs R.A."/>
            <person name="Loomis W.F."/>
            <person name="Platzer M."/>
            <person name="Kay R.R."/>
            <person name="Williams J.G."/>
            <person name="Dear P.H."/>
            <person name="Noegel A.A."/>
            <person name="Barrell B.G."/>
            <person name="Kuspa A."/>
        </authorList>
    </citation>
    <scope>NUCLEOTIDE SEQUENCE [LARGE SCALE GENOMIC DNA]</scope>
    <source>
        <strain>AX4</strain>
    </source>
</reference>
<proteinExistence type="inferred from homology"/>